<name>CLCB_ECOLI</name>
<comment type="function">
    <text evidence="2">Probably acts as an electrical shunt for an outwardly-directed proton pump that is linked to amino acid decarboxylation, as part of the extreme acid resistance (XAR) response.</text>
</comment>
<comment type="subcellular location">
    <subcellularLocation>
        <location>Cell inner membrane</location>
        <topology>Multi-pass membrane protein</topology>
    </subcellularLocation>
</comment>
<comment type="similarity">
    <text evidence="3">Belongs to the chloride channel (TC 2.A.49) family. ClcB subfamily.</text>
</comment>
<organism>
    <name type="scientific">Escherichia coli (strain K12)</name>
    <dbReference type="NCBI Taxonomy" id="83333"/>
    <lineage>
        <taxon>Bacteria</taxon>
        <taxon>Pseudomonadati</taxon>
        <taxon>Pseudomonadota</taxon>
        <taxon>Gammaproteobacteria</taxon>
        <taxon>Enterobacterales</taxon>
        <taxon>Enterobacteriaceae</taxon>
        <taxon>Escherichia</taxon>
    </lineage>
</organism>
<evidence type="ECO:0000255" key="1"/>
<evidence type="ECO:0000269" key="2">
    <source>
    </source>
</evidence>
<evidence type="ECO:0000305" key="3"/>
<accession>P76175</accession>
<accession>P77195</accession>
<protein>
    <recommendedName>
        <fullName>Voltage-gated ClC-type chloride channel ClcB</fullName>
    </recommendedName>
</protein>
<proteinExistence type="evidence at protein level"/>
<dbReference type="EMBL" id="U00096">
    <property type="protein sequence ID" value="AAC74664.2"/>
    <property type="molecule type" value="Genomic_DNA"/>
</dbReference>
<dbReference type="EMBL" id="AP009048">
    <property type="protein sequence ID" value="BAA15316.2"/>
    <property type="molecule type" value="Genomic_DNA"/>
</dbReference>
<dbReference type="PIR" id="B64915">
    <property type="entry name" value="B64915"/>
</dbReference>
<dbReference type="RefSeq" id="NP_416109.2">
    <property type="nucleotide sequence ID" value="NC_000913.3"/>
</dbReference>
<dbReference type="SMR" id="P76175"/>
<dbReference type="BioGRID" id="4259118">
    <property type="interactions" value="8"/>
</dbReference>
<dbReference type="DIP" id="DIP-28065N"/>
<dbReference type="FunCoup" id="P76175">
    <property type="interactions" value="128"/>
</dbReference>
<dbReference type="IntAct" id="P76175">
    <property type="interactions" value="2"/>
</dbReference>
<dbReference type="STRING" id="511145.b1592"/>
<dbReference type="PaxDb" id="511145-b1592"/>
<dbReference type="EnsemblBacteria" id="AAC74664">
    <property type="protein sequence ID" value="AAC74664"/>
    <property type="gene ID" value="b1592"/>
</dbReference>
<dbReference type="GeneID" id="947179"/>
<dbReference type="KEGG" id="ecj:JW5263"/>
<dbReference type="KEGG" id="eco:b1592"/>
<dbReference type="KEGG" id="ecoc:C3026_09170"/>
<dbReference type="PATRIC" id="fig|1411691.4.peg.670"/>
<dbReference type="EchoBASE" id="EB3609"/>
<dbReference type="eggNOG" id="COG0038">
    <property type="taxonomic scope" value="Bacteria"/>
</dbReference>
<dbReference type="HOGENOM" id="CLU_015263_5_2_6"/>
<dbReference type="InParanoid" id="P76175"/>
<dbReference type="OMA" id="VIFVMEV"/>
<dbReference type="PhylomeDB" id="P76175"/>
<dbReference type="BioCyc" id="EcoCyc:YNFJ-MONOMER"/>
<dbReference type="BioCyc" id="MetaCyc:YNFJ-MONOMER"/>
<dbReference type="PRO" id="PR:P76175"/>
<dbReference type="Proteomes" id="UP000000625">
    <property type="component" value="Chromosome"/>
</dbReference>
<dbReference type="GO" id="GO:0034707">
    <property type="term" value="C:chloride channel complex"/>
    <property type="evidence" value="ECO:0007669"/>
    <property type="project" value="UniProtKB-KW"/>
</dbReference>
<dbReference type="GO" id="GO:0005886">
    <property type="term" value="C:plasma membrane"/>
    <property type="evidence" value="ECO:0000255"/>
    <property type="project" value="EcoCyc"/>
</dbReference>
<dbReference type="GO" id="GO:0005247">
    <property type="term" value="F:voltage-gated chloride channel activity"/>
    <property type="evidence" value="ECO:0007669"/>
    <property type="project" value="UniProtKB-UniRule"/>
</dbReference>
<dbReference type="GO" id="GO:0071468">
    <property type="term" value="P:cellular response to acidic pH"/>
    <property type="evidence" value="ECO:0000269"/>
    <property type="project" value="EcoCyc"/>
</dbReference>
<dbReference type="CDD" id="cd00400">
    <property type="entry name" value="Voltage_gated_ClC"/>
    <property type="match status" value="1"/>
</dbReference>
<dbReference type="FunFam" id="1.10.3080.10:FF:000010">
    <property type="entry name" value="Voltage-gated ClC-type chloride channel ClcB"/>
    <property type="match status" value="1"/>
</dbReference>
<dbReference type="Gene3D" id="1.10.3080.10">
    <property type="entry name" value="Clc chloride channel"/>
    <property type="match status" value="1"/>
</dbReference>
<dbReference type="HAMAP" id="MF_01203">
    <property type="entry name" value="CLC_ClcB"/>
    <property type="match status" value="1"/>
</dbReference>
<dbReference type="InterPro" id="IPR014743">
    <property type="entry name" value="Cl-channel_core"/>
</dbReference>
<dbReference type="InterPro" id="IPR023790">
    <property type="entry name" value="Cl-channel_volt-gated_ClcB"/>
</dbReference>
<dbReference type="InterPro" id="IPR001807">
    <property type="entry name" value="ClC"/>
</dbReference>
<dbReference type="InterPro" id="IPR050368">
    <property type="entry name" value="ClC-type_chloride_channel"/>
</dbReference>
<dbReference type="NCBIfam" id="NF002437">
    <property type="entry name" value="PRK01610.1"/>
    <property type="match status" value="1"/>
</dbReference>
<dbReference type="PANTHER" id="PTHR43427">
    <property type="entry name" value="CHLORIDE CHANNEL PROTEIN CLC-E"/>
    <property type="match status" value="1"/>
</dbReference>
<dbReference type="PANTHER" id="PTHR43427:SF6">
    <property type="entry name" value="CHLORIDE CHANNEL PROTEIN CLC-E"/>
    <property type="match status" value="1"/>
</dbReference>
<dbReference type="Pfam" id="PF00654">
    <property type="entry name" value="Voltage_CLC"/>
    <property type="match status" value="1"/>
</dbReference>
<dbReference type="PRINTS" id="PR00762">
    <property type="entry name" value="CLCHANNEL"/>
</dbReference>
<dbReference type="SUPFAM" id="SSF81340">
    <property type="entry name" value="Clc chloride channel"/>
    <property type="match status" value="1"/>
</dbReference>
<feature type="chain" id="PRO_0000094485" description="Voltage-gated ClC-type chloride channel ClcB">
    <location>
        <begin position="1"/>
        <end position="418"/>
    </location>
</feature>
<feature type="topological domain" description="Cytoplasmic" evidence="1">
    <location>
        <position position="1"/>
    </location>
</feature>
<feature type="transmembrane region" description="Helical" evidence="1">
    <location>
        <begin position="2"/>
        <end position="22"/>
    </location>
</feature>
<feature type="topological domain" description="Periplasmic" evidence="1">
    <location>
        <begin position="23"/>
        <end position="53"/>
    </location>
</feature>
<feature type="transmembrane region" description="Helical" evidence="1">
    <location>
        <begin position="54"/>
        <end position="74"/>
    </location>
</feature>
<feature type="topological domain" description="Cytoplasmic" evidence="1">
    <location>
        <begin position="75"/>
        <end position="145"/>
    </location>
</feature>
<feature type="transmembrane region" description="Helical" evidence="1">
    <location>
        <begin position="146"/>
        <end position="166"/>
    </location>
</feature>
<feature type="topological domain" description="Periplasmic" evidence="1">
    <location>
        <begin position="167"/>
        <end position="177"/>
    </location>
</feature>
<feature type="transmembrane region" description="Helical" evidence="1">
    <location>
        <begin position="178"/>
        <end position="200"/>
    </location>
</feature>
<feature type="topological domain" description="Cytoplasmic" evidence="1">
    <location>
        <begin position="201"/>
        <end position="221"/>
    </location>
</feature>
<feature type="transmembrane region" description="Helical" evidence="1">
    <location>
        <begin position="222"/>
        <end position="242"/>
    </location>
</feature>
<feature type="topological domain" description="Periplasmic" evidence="1">
    <location>
        <begin position="243"/>
        <end position="257"/>
    </location>
</feature>
<feature type="transmembrane region" description="Helical" evidence="1">
    <location>
        <begin position="258"/>
        <end position="278"/>
    </location>
</feature>
<feature type="topological domain" description="Cytoplasmic" evidence="1">
    <location>
        <begin position="279"/>
        <end position="290"/>
    </location>
</feature>
<feature type="transmembrane region" description="Helical" evidence="1">
    <location>
        <begin position="291"/>
        <end position="311"/>
    </location>
</feature>
<feature type="topological domain" description="Periplasmic" evidence="1">
    <location>
        <begin position="312"/>
        <end position="315"/>
    </location>
</feature>
<feature type="transmembrane region" description="Helical" evidence="1">
    <location>
        <begin position="316"/>
        <end position="336"/>
    </location>
</feature>
<feature type="topological domain" description="Cytoplasmic" evidence="1">
    <location>
        <begin position="337"/>
        <end position="351"/>
    </location>
</feature>
<feature type="transmembrane region" description="Helical" evidence="1">
    <location>
        <begin position="352"/>
        <end position="372"/>
    </location>
</feature>
<feature type="topological domain" description="Periplasmic" evidence="1">
    <location>
        <begin position="373"/>
        <end position="379"/>
    </location>
</feature>
<feature type="transmembrane region" description="Helical" evidence="1">
    <location>
        <begin position="380"/>
        <end position="400"/>
    </location>
</feature>
<feature type="topological domain" description="Cytoplasmic" evidence="1">
    <location>
        <begin position="401"/>
        <end position="418"/>
    </location>
</feature>
<reference key="1">
    <citation type="journal article" date="1996" name="DNA Res.">
        <title>A 570-kb DNA sequence of the Escherichia coli K-12 genome corresponding to the 28.0-40.1 min region on the linkage map.</title>
        <authorList>
            <person name="Aiba H."/>
            <person name="Baba T."/>
            <person name="Fujita K."/>
            <person name="Hayashi K."/>
            <person name="Inada T."/>
            <person name="Isono K."/>
            <person name="Itoh T."/>
            <person name="Kasai H."/>
            <person name="Kashimoto K."/>
            <person name="Kimura S."/>
            <person name="Kitakawa M."/>
            <person name="Kitagawa M."/>
            <person name="Makino K."/>
            <person name="Miki T."/>
            <person name="Mizobuchi K."/>
            <person name="Mori H."/>
            <person name="Mori T."/>
            <person name="Motomura K."/>
            <person name="Nakade S."/>
            <person name="Nakamura Y."/>
            <person name="Nashimoto H."/>
            <person name="Nishio Y."/>
            <person name="Oshima T."/>
            <person name="Saito N."/>
            <person name="Sampei G."/>
            <person name="Seki Y."/>
            <person name="Sivasundaram S."/>
            <person name="Tagami H."/>
            <person name="Takeda J."/>
            <person name="Takemoto K."/>
            <person name="Takeuchi Y."/>
            <person name="Wada C."/>
            <person name="Yamamoto Y."/>
            <person name="Horiuchi T."/>
        </authorList>
    </citation>
    <scope>NUCLEOTIDE SEQUENCE [LARGE SCALE GENOMIC DNA]</scope>
    <source>
        <strain>K12 / W3110 / ATCC 27325 / DSM 5911</strain>
    </source>
</reference>
<reference key="2">
    <citation type="journal article" date="1997" name="Science">
        <title>The complete genome sequence of Escherichia coli K-12.</title>
        <authorList>
            <person name="Blattner F.R."/>
            <person name="Plunkett G. III"/>
            <person name="Bloch C.A."/>
            <person name="Perna N.T."/>
            <person name="Burland V."/>
            <person name="Riley M."/>
            <person name="Collado-Vides J."/>
            <person name="Glasner J.D."/>
            <person name="Rode C.K."/>
            <person name="Mayhew G.F."/>
            <person name="Gregor J."/>
            <person name="Davis N.W."/>
            <person name="Kirkpatrick H.A."/>
            <person name="Goeden M.A."/>
            <person name="Rose D.J."/>
            <person name="Mau B."/>
            <person name="Shao Y."/>
        </authorList>
    </citation>
    <scope>NUCLEOTIDE SEQUENCE [LARGE SCALE GENOMIC DNA]</scope>
    <source>
        <strain>K12 / MG1655 / ATCC 47076</strain>
    </source>
</reference>
<reference key="3">
    <citation type="journal article" date="2006" name="Mol. Syst. Biol.">
        <title>Highly accurate genome sequences of Escherichia coli K-12 strains MG1655 and W3110.</title>
        <authorList>
            <person name="Hayashi K."/>
            <person name="Morooka N."/>
            <person name="Yamamoto Y."/>
            <person name="Fujita K."/>
            <person name="Isono K."/>
            <person name="Choi S."/>
            <person name="Ohtsubo E."/>
            <person name="Baba T."/>
            <person name="Wanner B.L."/>
            <person name="Mori H."/>
            <person name="Horiuchi T."/>
        </authorList>
    </citation>
    <scope>NUCLEOTIDE SEQUENCE [LARGE SCALE GENOMIC DNA]</scope>
    <source>
        <strain>K12 / W3110 / ATCC 27325 / DSM 5911</strain>
    </source>
</reference>
<reference key="4">
    <citation type="journal article" date="2002" name="Nature">
        <title>A biological role for prokaryotic ClC chloride channels.</title>
        <authorList>
            <person name="Iyer R."/>
            <person name="Iverson T.M."/>
            <person name="Accardi A."/>
            <person name="Miller C."/>
        </authorList>
    </citation>
    <scope>FUNCTION</scope>
    <source>
        <strain>K12 / MG1655 / ATCC 47076</strain>
    </source>
</reference>
<reference key="5">
    <citation type="journal article" date="2005" name="Science">
        <title>Global topology analysis of the Escherichia coli inner membrane proteome.</title>
        <authorList>
            <person name="Daley D.O."/>
            <person name="Rapp M."/>
            <person name="Granseth E."/>
            <person name="Melen K."/>
            <person name="Drew D."/>
            <person name="von Heijne G."/>
        </authorList>
    </citation>
    <scope>TOPOLOGY [LARGE SCALE ANALYSIS]</scope>
    <source>
        <strain>K12 / MG1655 / ATCC 47076</strain>
    </source>
</reference>
<keyword id="KW-0997">Cell inner membrane</keyword>
<keyword id="KW-1003">Cell membrane</keyword>
<keyword id="KW-0868">Chloride</keyword>
<keyword id="KW-0869">Chloride channel</keyword>
<keyword id="KW-0407">Ion channel</keyword>
<keyword id="KW-0406">Ion transport</keyword>
<keyword id="KW-0472">Membrane</keyword>
<keyword id="KW-1185">Reference proteome</keyword>
<keyword id="KW-0812">Transmembrane</keyword>
<keyword id="KW-1133">Transmembrane helix</keyword>
<keyword id="KW-0813">Transport</keyword>
<keyword id="KW-0851">Voltage-gated channel</keyword>
<gene>
    <name type="primary">clcB</name>
    <name type="synonym">mriT</name>
    <name type="synonym">ynfJ</name>
    <name type="ordered locus">b1592</name>
    <name type="ordered locus">JW5263</name>
</gene>
<sequence>MFHRLLIATVVGILAAFAVAGFRHAMLLLEWLFLNNDSGSLVNAATNLSPWRRLLTPALGGLAAGLLLMGWQKFTQQRPHAPTDYMEALQTDGQFDYAASLVKSLASLLVVTSGSAIGREGAMILLAALAASCFAQRFTPRQEWKLWIACGAAAGMAAAYRAPLAGSLFIAEVLFGTMMLASLGPVIISAVVALLVSNLINHSDALLYNVQLSVTVQARDYALIISTGVLAGLCGPLLLTLMNACHRGFVSLKLAPPWQLALGGLIVGLLSLFTPAVWGNGYSTVQSFLTAPPLLMIIAGIFLCKLCAVLASSGSGAPGGVFTPTLFIGLAIGMLYGRSLGLWFPDGEEITLLLGLTGMATLLAATTHAPIMSTLMICEMTGEYQLLPGLLIACVIASVISRTLHRDSIYRQHTAQHS</sequence>